<reference key="1">
    <citation type="journal article" date="2002" name="Proc. Natl. Acad. Sci. U.S.A.">
        <title>Extensive mosaic structure revealed by the complete genome sequence of uropathogenic Escherichia coli.</title>
        <authorList>
            <person name="Welch R.A."/>
            <person name="Burland V."/>
            <person name="Plunkett G. III"/>
            <person name="Redford P."/>
            <person name="Roesch P."/>
            <person name="Rasko D."/>
            <person name="Buckles E.L."/>
            <person name="Liou S.-R."/>
            <person name="Boutin A."/>
            <person name="Hackett J."/>
            <person name="Stroud D."/>
            <person name="Mayhew G.F."/>
            <person name="Rose D.J."/>
            <person name="Zhou S."/>
            <person name="Schwartz D.C."/>
            <person name="Perna N.T."/>
            <person name="Mobley H.L.T."/>
            <person name="Donnenberg M.S."/>
            <person name="Blattner F.R."/>
        </authorList>
    </citation>
    <scope>NUCLEOTIDE SEQUENCE [LARGE SCALE GENOMIC DNA]</scope>
    <source>
        <strain>CFT073 / ATCC 700928 / UPEC</strain>
    </source>
</reference>
<keyword id="KW-0227">DNA damage</keyword>
<keyword id="KW-0233">DNA recombination</keyword>
<keyword id="KW-0234">DNA repair</keyword>
<keyword id="KW-0479">Metal-binding</keyword>
<keyword id="KW-1185">Reference proteome</keyword>
<keyword id="KW-0862">Zinc</keyword>
<keyword id="KW-0863">Zinc-finger</keyword>
<protein>
    <recommendedName>
        <fullName evidence="1">Recombination protein RecR</fullName>
    </recommendedName>
</protein>
<evidence type="ECO:0000255" key="1">
    <source>
        <dbReference type="HAMAP-Rule" id="MF_00017"/>
    </source>
</evidence>
<dbReference type="EMBL" id="AE014075">
    <property type="protein sequence ID" value="AAN79070.1"/>
    <property type="molecule type" value="Genomic_DNA"/>
</dbReference>
<dbReference type="RefSeq" id="WP_001195025.1">
    <property type="nucleotide sequence ID" value="NZ_CP051263.1"/>
</dbReference>
<dbReference type="RefSeq" id="WP_001195028.1">
    <property type="nucleotide sequence ID" value="NC_004431.1"/>
</dbReference>
<dbReference type="SMR" id="P0A7H7"/>
<dbReference type="STRING" id="199310.c0592"/>
<dbReference type="GeneID" id="93776978"/>
<dbReference type="KEGG" id="ecc:c0592"/>
<dbReference type="eggNOG" id="COG0353">
    <property type="taxonomic scope" value="Bacteria"/>
</dbReference>
<dbReference type="HOGENOM" id="CLU_060739_1_2_6"/>
<dbReference type="BioCyc" id="ECOL199310:C0592-MONOMER"/>
<dbReference type="Proteomes" id="UP000001410">
    <property type="component" value="Chromosome"/>
</dbReference>
<dbReference type="GO" id="GO:0003677">
    <property type="term" value="F:DNA binding"/>
    <property type="evidence" value="ECO:0007669"/>
    <property type="project" value="UniProtKB-UniRule"/>
</dbReference>
<dbReference type="GO" id="GO:0008270">
    <property type="term" value="F:zinc ion binding"/>
    <property type="evidence" value="ECO:0007669"/>
    <property type="project" value="UniProtKB-KW"/>
</dbReference>
<dbReference type="GO" id="GO:0006310">
    <property type="term" value="P:DNA recombination"/>
    <property type="evidence" value="ECO:0007669"/>
    <property type="project" value="UniProtKB-UniRule"/>
</dbReference>
<dbReference type="GO" id="GO:0006281">
    <property type="term" value="P:DNA repair"/>
    <property type="evidence" value="ECO:0007669"/>
    <property type="project" value="UniProtKB-UniRule"/>
</dbReference>
<dbReference type="CDD" id="cd01025">
    <property type="entry name" value="TOPRIM_recR"/>
    <property type="match status" value="1"/>
</dbReference>
<dbReference type="FunFam" id="1.10.8.420:FF:000001">
    <property type="entry name" value="Recombination protein RecR"/>
    <property type="match status" value="1"/>
</dbReference>
<dbReference type="FunFam" id="3.40.1360.10:FF:000001">
    <property type="entry name" value="Recombination protein RecR"/>
    <property type="match status" value="1"/>
</dbReference>
<dbReference type="Gene3D" id="3.40.1360.10">
    <property type="match status" value="1"/>
</dbReference>
<dbReference type="Gene3D" id="6.10.250.240">
    <property type="match status" value="1"/>
</dbReference>
<dbReference type="Gene3D" id="1.10.8.420">
    <property type="entry name" value="RecR Domain 1"/>
    <property type="match status" value="1"/>
</dbReference>
<dbReference type="HAMAP" id="MF_00017">
    <property type="entry name" value="RecR"/>
    <property type="match status" value="1"/>
</dbReference>
<dbReference type="InterPro" id="IPR000093">
    <property type="entry name" value="DNA_Rcmb_RecR"/>
</dbReference>
<dbReference type="InterPro" id="IPR023627">
    <property type="entry name" value="Rcmb_RecR"/>
</dbReference>
<dbReference type="InterPro" id="IPR015967">
    <property type="entry name" value="Rcmb_RecR_Znf"/>
</dbReference>
<dbReference type="InterPro" id="IPR006171">
    <property type="entry name" value="TOPRIM_dom"/>
</dbReference>
<dbReference type="InterPro" id="IPR034137">
    <property type="entry name" value="TOPRIM_RecR"/>
</dbReference>
<dbReference type="NCBIfam" id="TIGR00615">
    <property type="entry name" value="recR"/>
    <property type="match status" value="1"/>
</dbReference>
<dbReference type="PANTHER" id="PTHR30446">
    <property type="entry name" value="RECOMBINATION PROTEIN RECR"/>
    <property type="match status" value="1"/>
</dbReference>
<dbReference type="PANTHER" id="PTHR30446:SF0">
    <property type="entry name" value="RECOMBINATION PROTEIN RECR"/>
    <property type="match status" value="1"/>
</dbReference>
<dbReference type="Pfam" id="PF21175">
    <property type="entry name" value="RecR_C"/>
    <property type="match status" value="1"/>
</dbReference>
<dbReference type="Pfam" id="PF21176">
    <property type="entry name" value="RecR_HhH"/>
    <property type="match status" value="1"/>
</dbReference>
<dbReference type="Pfam" id="PF02132">
    <property type="entry name" value="RecR_ZnF"/>
    <property type="match status" value="1"/>
</dbReference>
<dbReference type="Pfam" id="PF13662">
    <property type="entry name" value="Toprim_4"/>
    <property type="match status" value="1"/>
</dbReference>
<dbReference type="SMART" id="SM00493">
    <property type="entry name" value="TOPRIM"/>
    <property type="match status" value="1"/>
</dbReference>
<dbReference type="SUPFAM" id="SSF111304">
    <property type="entry name" value="Recombination protein RecR"/>
    <property type="match status" value="1"/>
</dbReference>
<dbReference type="PROSITE" id="PS01300">
    <property type="entry name" value="RECR"/>
    <property type="match status" value="1"/>
</dbReference>
<dbReference type="PROSITE" id="PS50880">
    <property type="entry name" value="TOPRIM"/>
    <property type="match status" value="1"/>
</dbReference>
<gene>
    <name evidence="1" type="primary">recR</name>
    <name type="ordered locus">c0592</name>
</gene>
<proteinExistence type="inferred from homology"/>
<feature type="chain" id="PRO_0000190317" description="Recombination protein RecR">
    <location>
        <begin position="1"/>
        <end position="201"/>
    </location>
</feature>
<feature type="domain" description="Toprim" evidence="1">
    <location>
        <begin position="81"/>
        <end position="176"/>
    </location>
</feature>
<feature type="zinc finger region" description="C4-type" evidence="1">
    <location>
        <begin position="57"/>
        <end position="72"/>
    </location>
</feature>
<accession>P0A7H7</accession>
<accession>P12727</accession>
<comment type="function">
    <text evidence="1">May play a role in DNA repair. It seems to be involved in an RecBC-independent recombinational process of DNA repair. It may act with RecF and RecO.</text>
</comment>
<comment type="similarity">
    <text evidence="1">Belongs to the RecR family.</text>
</comment>
<sequence>MQTSPLLTQLMEALRCLPGVGPKSAQRMAFTLLQRDRSGGMRLAQALTRAMSEIGHCADCRTFTEQEVCNICSNPRRQENGQICVVESPADIYAIEQTGQFSGRYFVLMGHLSPLDGIGPDDIGLDRLEQRLAEEKITEVILATNPTVEGEATANYIAELCAQYDVEASRIAHGVPVGGELEMVDGTTLSHSLAGRHKIRF</sequence>
<name>RECR_ECOL6</name>
<organism>
    <name type="scientific">Escherichia coli O6:H1 (strain CFT073 / ATCC 700928 / UPEC)</name>
    <dbReference type="NCBI Taxonomy" id="199310"/>
    <lineage>
        <taxon>Bacteria</taxon>
        <taxon>Pseudomonadati</taxon>
        <taxon>Pseudomonadota</taxon>
        <taxon>Gammaproteobacteria</taxon>
        <taxon>Enterobacterales</taxon>
        <taxon>Enterobacteriaceae</taxon>
        <taxon>Escherichia</taxon>
    </lineage>
</organism>